<protein>
    <recommendedName>
        <fullName evidence="1">Aspartate 1-decarboxylase</fullName>
        <ecNumber evidence="1">4.1.1.11</ecNumber>
    </recommendedName>
    <alternativeName>
        <fullName evidence="1">Aspartate alpha-decarboxylase</fullName>
    </alternativeName>
    <component>
        <recommendedName>
            <fullName evidence="1">Aspartate 1-decarboxylase beta chain</fullName>
        </recommendedName>
    </component>
    <component>
        <recommendedName>
            <fullName evidence="1">Aspartate 1-decarboxylase alpha chain</fullName>
        </recommendedName>
    </component>
</protein>
<name>PAND_PROMH</name>
<feature type="chain" id="PRO_1000124857" description="Aspartate 1-decarboxylase beta chain" evidence="1">
    <location>
        <begin position="1"/>
        <end position="24"/>
    </location>
</feature>
<feature type="chain" id="PRO_1000124858" description="Aspartate 1-decarboxylase alpha chain" evidence="1">
    <location>
        <begin position="25"/>
        <end position="126"/>
    </location>
</feature>
<feature type="active site" description="Schiff-base intermediate with substrate; via pyruvic acid" evidence="1">
    <location>
        <position position="25"/>
    </location>
</feature>
<feature type="active site" description="Proton donor" evidence="1">
    <location>
        <position position="58"/>
    </location>
</feature>
<feature type="binding site" evidence="1">
    <location>
        <position position="57"/>
    </location>
    <ligand>
        <name>substrate</name>
    </ligand>
</feature>
<feature type="binding site" evidence="1">
    <location>
        <begin position="73"/>
        <end position="75"/>
    </location>
    <ligand>
        <name>substrate</name>
    </ligand>
</feature>
<feature type="modified residue" description="Pyruvic acid (Ser)" evidence="1">
    <location>
        <position position="25"/>
    </location>
</feature>
<organism>
    <name type="scientific">Proteus mirabilis (strain HI4320)</name>
    <dbReference type="NCBI Taxonomy" id="529507"/>
    <lineage>
        <taxon>Bacteria</taxon>
        <taxon>Pseudomonadati</taxon>
        <taxon>Pseudomonadota</taxon>
        <taxon>Gammaproteobacteria</taxon>
        <taxon>Enterobacterales</taxon>
        <taxon>Morganellaceae</taxon>
        <taxon>Proteus</taxon>
    </lineage>
</organism>
<reference key="1">
    <citation type="journal article" date="2008" name="J. Bacteriol.">
        <title>Complete genome sequence of uropathogenic Proteus mirabilis, a master of both adherence and motility.</title>
        <authorList>
            <person name="Pearson M.M."/>
            <person name="Sebaihia M."/>
            <person name="Churcher C."/>
            <person name="Quail M.A."/>
            <person name="Seshasayee A.S."/>
            <person name="Luscombe N.M."/>
            <person name="Abdellah Z."/>
            <person name="Arrosmith C."/>
            <person name="Atkin B."/>
            <person name="Chillingworth T."/>
            <person name="Hauser H."/>
            <person name="Jagels K."/>
            <person name="Moule S."/>
            <person name="Mungall K."/>
            <person name="Norbertczak H."/>
            <person name="Rabbinowitsch E."/>
            <person name="Walker D."/>
            <person name="Whithead S."/>
            <person name="Thomson N.R."/>
            <person name="Rather P.N."/>
            <person name="Parkhill J."/>
            <person name="Mobley H.L.T."/>
        </authorList>
    </citation>
    <scope>NUCLEOTIDE SEQUENCE [LARGE SCALE GENOMIC DNA]</scope>
    <source>
        <strain>HI4320</strain>
    </source>
</reference>
<comment type="function">
    <text evidence="1">Catalyzes the pyruvoyl-dependent decarboxylation of aspartate to produce beta-alanine.</text>
</comment>
<comment type="catalytic activity">
    <reaction evidence="1">
        <text>L-aspartate + H(+) = beta-alanine + CO2</text>
        <dbReference type="Rhea" id="RHEA:19497"/>
        <dbReference type="ChEBI" id="CHEBI:15378"/>
        <dbReference type="ChEBI" id="CHEBI:16526"/>
        <dbReference type="ChEBI" id="CHEBI:29991"/>
        <dbReference type="ChEBI" id="CHEBI:57966"/>
        <dbReference type="EC" id="4.1.1.11"/>
    </reaction>
</comment>
<comment type="cofactor">
    <cofactor evidence="1">
        <name>pyruvate</name>
        <dbReference type="ChEBI" id="CHEBI:15361"/>
    </cofactor>
    <text evidence="1">Binds 1 pyruvoyl group covalently per subunit.</text>
</comment>
<comment type="pathway">
    <text evidence="1">Cofactor biosynthesis; (R)-pantothenate biosynthesis; beta-alanine from L-aspartate: step 1/1.</text>
</comment>
<comment type="subunit">
    <text evidence="1">Heterooctamer of four alpha and four beta subunits.</text>
</comment>
<comment type="subcellular location">
    <subcellularLocation>
        <location evidence="1">Cytoplasm</location>
    </subcellularLocation>
</comment>
<comment type="PTM">
    <text evidence="1">Is synthesized initially as an inactive proenzyme, which is activated by self-cleavage at a specific serine bond to produce a beta-subunit with a hydroxyl group at its C-terminus and an alpha-subunit with a pyruvoyl group at its N-terminus.</text>
</comment>
<comment type="similarity">
    <text evidence="1">Belongs to the PanD family.</text>
</comment>
<keyword id="KW-0068">Autocatalytic cleavage</keyword>
<keyword id="KW-0963">Cytoplasm</keyword>
<keyword id="KW-0210">Decarboxylase</keyword>
<keyword id="KW-0456">Lyase</keyword>
<keyword id="KW-0566">Pantothenate biosynthesis</keyword>
<keyword id="KW-0670">Pyruvate</keyword>
<keyword id="KW-1185">Reference proteome</keyword>
<keyword id="KW-0704">Schiff base</keyword>
<keyword id="KW-0865">Zymogen</keyword>
<gene>
    <name evidence="1" type="primary">panD</name>
    <name type="ordered locus">PMI0194</name>
</gene>
<evidence type="ECO:0000255" key="1">
    <source>
        <dbReference type="HAMAP-Rule" id="MF_00446"/>
    </source>
</evidence>
<proteinExistence type="inferred from homology"/>
<sequence>MLRTMLQGKLHRVKVTQADLHYEGSCAIDQDFMDAAGILENEAIDIYNVDNGERFSTYAICAERGSGIISVNGAAARRAAVGDRLIICSYVQIPDSDARSHKPNIAYFEGDNEMKRIAKAVPVQVA</sequence>
<dbReference type="EC" id="4.1.1.11" evidence="1"/>
<dbReference type="EMBL" id="AM942759">
    <property type="protein sequence ID" value="CAR40572.1"/>
    <property type="molecule type" value="Genomic_DNA"/>
</dbReference>
<dbReference type="RefSeq" id="WP_004247282.1">
    <property type="nucleotide sequence ID" value="NC_010554.1"/>
</dbReference>
<dbReference type="SMR" id="B4EUD1"/>
<dbReference type="EnsemblBacteria" id="CAR40572">
    <property type="protein sequence ID" value="CAR40572"/>
    <property type="gene ID" value="PMI0194"/>
</dbReference>
<dbReference type="GeneID" id="6802290"/>
<dbReference type="KEGG" id="pmr:PMI0194"/>
<dbReference type="eggNOG" id="COG0853">
    <property type="taxonomic scope" value="Bacteria"/>
</dbReference>
<dbReference type="HOGENOM" id="CLU_115305_2_1_6"/>
<dbReference type="UniPathway" id="UPA00028">
    <property type="reaction ID" value="UER00002"/>
</dbReference>
<dbReference type="Proteomes" id="UP000008319">
    <property type="component" value="Chromosome"/>
</dbReference>
<dbReference type="GO" id="GO:0005829">
    <property type="term" value="C:cytosol"/>
    <property type="evidence" value="ECO:0007669"/>
    <property type="project" value="TreeGrafter"/>
</dbReference>
<dbReference type="GO" id="GO:0004068">
    <property type="term" value="F:aspartate 1-decarboxylase activity"/>
    <property type="evidence" value="ECO:0007669"/>
    <property type="project" value="UniProtKB-UniRule"/>
</dbReference>
<dbReference type="GO" id="GO:0006523">
    <property type="term" value="P:alanine biosynthetic process"/>
    <property type="evidence" value="ECO:0007669"/>
    <property type="project" value="InterPro"/>
</dbReference>
<dbReference type="GO" id="GO:0015940">
    <property type="term" value="P:pantothenate biosynthetic process"/>
    <property type="evidence" value="ECO:0007669"/>
    <property type="project" value="UniProtKB-UniRule"/>
</dbReference>
<dbReference type="CDD" id="cd06919">
    <property type="entry name" value="Asp_decarbox"/>
    <property type="match status" value="1"/>
</dbReference>
<dbReference type="FunFam" id="2.40.40.20:FF:000004">
    <property type="entry name" value="Aspartate 1-decarboxylase"/>
    <property type="match status" value="1"/>
</dbReference>
<dbReference type="Gene3D" id="2.40.40.20">
    <property type="match status" value="1"/>
</dbReference>
<dbReference type="HAMAP" id="MF_00446">
    <property type="entry name" value="PanD"/>
    <property type="match status" value="1"/>
</dbReference>
<dbReference type="InterPro" id="IPR009010">
    <property type="entry name" value="Asp_de-COase-like_dom_sf"/>
</dbReference>
<dbReference type="InterPro" id="IPR003190">
    <property type="entry name" value="Asp_decarbox"/>
</dbReference>
<dbReference type="NCBIfam" id="TIGR00223">
    <property type="entry name" value="panD"/>
    <property type="match status" value="1"/>
</dbReference>
<dbReference type="PANTHER" id="PTHR21012">
    <property type="entry name" value="ASPARTATE 1-DECARBOXYLASE"/>
    <property type="match status" value="1"/>
</dbReference>
<dbReference type="PANTHER" id="PTHR21012:SF0">
    <property type="entry name" value="ASPARTATE 1-DECARBOXYLASE"/>
    <property type="match status" value="1"/>
</dbReference>
<dbReference type="Pfam" id="PF02261">
    <property type="entry name" value="Asp_decarbox"/>
    <property type="match status" value="1"/>
</dbReference>
<dbReference type="PIRSF" id="PIRSF006246">
    <property type="entry name" value="Asp_decarbox"/>
    <property type="match status" value="1"/>
</dbReference>
<dbReference type="SUPFAM" id="SSF50692">
    <property type="entry name" value="ADC-like"/>
    <property type="match status" value="1"/>
</dbReference>
<accession>B4EUD1</accession>